<keyword id="KW-0175">Coiled coil</keyword>
<keyword id="KW-0223">Dioxygenase</keyword>
<keyword id="KW-0408">Iron</keyword>
<keyword id="KW-0479">Metal-binding</keyword>
<keyword id="KW-0560">Oxidoreductase</keyword>
<keyword id="KW-1185">Reference proteome</keyword>
<evidence type="ECO:0000255" key="1"/>
<evidence type="ECO:0000256" key="2">
    <source>
        <dbReference type="SAM" id="MobiDB-lite"/>
    </source>
</evidence>
<evidence type="ECO:0000269" key="3">
    <source>
    </source>
</evidence>
<evidence type="ECO:0000303" key="4">
    <source>
    </source>
</evidence>
<evidence type="ECO:0000305" key="5"/>
<evidence type="ECO:0000305" key="6">
    <source>
    </source>
</evidence>
<evidence type="ECO:0000312" key="7">
    <source>
        <dbReference type="Araport" id="AT4G02940"/>
    </source>
</evidence>
<evidence type="ECO:0000312" key="8">
    <source>
        <dbReference type="EMBL" id="AAC79112.1"/>
    </source>
</evidence>
<protein>
    <recommendedName>
        <fullName evidence="5">RNA demethylase ALKBH10B</fullName>
        <ecNumber evidence="3">1.14.11.53</ecNumber>
    </recommendedName>
    <alternativeName>
        <fullName evidence="5">Alkylated DNA repair protein alkB homolog 10B</fullName>
    </alternativeName>
    <alternativeName>
        <fullName evidence="5">Alpha-ketoglutarate-dependent dioxygenase alkB homolog 10B</fullName>
    </alternativeName>
</protein>
<gene>
    <name evidence="4" type="primary">ALKBH10B</name>
    <name evidence="7" type="ordered locus">At4g02940</name>
    <name evidence="8" type="ORF">T4I9.18</name>
</gene>
<reference key="1">
    <citation type="journal article" date="1999" name="Nature">
        <title>Sequence and analysis of chromosome 4 of the plant Arabidopsis thaliana.</title>
        <authorList>
            <person name="Mayer K.F.X."/>
            <person name="Schueller C."/>
            <person name="Wambutt R."/>
            <person name="Murphy G."/>
            <person name="Volckaert G."/>
            <person name="Pohl T."/>
            <person name="Duesterhoeft A."/>
            <person name="Stiekema W."/>
            <person name="Entian K.-D."/>
            <person name="Terryn N."/>
            <person name="Harris B."/>
            <person name="Ansorge W."/>
            <person name="Brandt P."/>
            <person name="Grivell L.A."/>
            <person name="Rieger M."/>
            <person name="Weichselgartner M."/>
            <person name="de Simone V."/>
            <person name="Obermaier B."/>
            <person name="Mache R."/>
            <person name="Mueller M."/>
            <person name="Kreis M."/>
            <person name="Delseny M."/>
            <person name="Puigdomenech P."/>
            <person name="Watson M."/>
            <person name="Schmidtheini T."/>
            <person name="Reichert B."/>
            <person name="Portetelle D."/>
            <person name="Perez-Alonso M."/>
            <person name="Boutry M."/>
            <person name="Bancroft I."/>
            <person name="Vos P."/>
            <person name="Hoheisel J."/>
            <person name="Zimmermann W."/>
            <person name="Wedler H."/>
            <person name="Ridley P."/>
            <person name="Langham S.-A."/>
            <person name="McCullagh B."/>
            <person name="Bilham L."/>
            <person name="Robben J."/>
            <person name="van der Schueren J."/>
            <person name="Grymonprez B."/>
            <person name="Chuang Y.-J."/>
            <person name="Vandenbussche F."/>
            <person name="Braeken M."/>
            <person name="Weltjens I."/>
            <person name="Voet M."/>
            <person name="Bastiaens I."/>
            <person name="Aert R."/>
            <person name="Defoor E."/>
            <person name="Weitzenegger T."/>
            <person name="Bothe G."/>
            <person name="Ramsperger U."/>
            <person name="Hilbert H."/>
            <person name="Braun M."/>
            <person name="Holzer E."/>
            <person name="Brandt A."/>
            <person name="Peters S."/>
            <person name="van Staveren M."/>
            <person name="Dirkse W."/>
            <person name="Mooijman P."/>
            <person name="Klein Lankhorst R."/>
            <person name="Rose M."/>
            <person name="Hauf J."/>
            <person name="Koetter P."/>
            <person name="Berneiser S."/>
            <person name="Hempel S."/>
            <person name="Feldpausch M."/>
            <person name="Lamberth S."/>
            <person name="Van den Daele H."/>
            <person name="De Keyser A."/>
            <person name="Buysshaert C."/>
            <person name="Gielen J."/>
            <person name="Villarroel R."/>
            <person name="De Clercq R."/>
            <person name="van Montagu M."/>
            <person name="Rogers J."/>
            <person name="Cronin A."/>
            <person name="Quail M.A."/>
            <person name="Bray-Allen S."/>
            <person name="Clark L."/>
            <person name="Doggett J."/>
            <person name="Hall S."/>
            <person name="Kay M."/>
            <person name="Lennard N."/>
            <person name="McLay K."/>
            <person name="Mayes R."/>
            <person name="Pettett A."/>
            <person name="Rajandream M.A."/>
            <person name="Lyne M."/>
            <person name="Benes V."/>
            <person name="Rechmann S."/>
            <person name="Borkova D."/>
            <person name="Bloecker H."/>
            <person name="Scharfe M."/>
            <person name="Grimm M."/>
            <person name="Loehnert T.-H."/>
            <person name="Dose S."/>
            <person name="de Haan M."/>
            <person name="Maarse A.C."/>
            <person name="Schaefer M."/>
            <person name="Mueller-Auer S."/>
            <person name="Gabel C."/>
            <person name="Fuchs M."/>
            <person name="Fartmann B."/>
            <person name="Granderath K."/>
            <person name="Dauner D."/>
            <person name="Herzl A."/>
            <person name="Neumann S."/>
            <person name="Argiriou A."/>
            <person name="Vitale D."/>
            <person name="Liguori R."/>
            <person name="Piravandi E."/>
            <person name="Massenet O."/>
            <person name="Quigley F."/>
            <person name="Clabauld G."/>
            <person name="Muendlein A."/>
            <person name="Felber R."/>
            <person name="Schnabl S."/>
            <person name="Hiller R."/>
            <person name="Schmidt W."/>
            <person name="Lecharny A."/>
            <person name="Aubourg S."/>
            <person name="Chefdor F."/>
            <person name="Cooke R."/>
            <person name="Berger C."/>
            <person name="Monfort A."/>
            <person name="Casacuberta E."/>
            <person name="Gibbons T."/>
            <person name="Weber N."/>
            <person name="Vandenbol M."/>
            <person name="Bargues M."/>
            <person name="Terol J."/>
            <person name="Torres A."/>
            <person name="Perez-Perez A."/>
            <person name="Purnelle B."/>
            <person name="Bent E."/>
            <person name="Johnson S."/>
            <person name="Tacon D."/>
            <person name="Jesse T."/>
            <person name="Heijnen L."/>
            <person name="Schwarz S."/>
            <person name="Scholler P."/>
            <person name="Heber S."/>
            <person name="Francs P."/>
            <person name="Bielke C."/>
            <person name="Frishman D."/>
            <person name="Haase D."/>
            <person name="Lemcke K."/>
            <person name="Mewes H.-W."/>
            <person name="Stocker S."/>
            <person name="Zaccaria P."/>
            <person name="Bevan M."/>
            <person name="Wilson R.K."/>
            <person name="de la Bastide M."/>
            <person name="Habermann K."/>
            <person name="Parnell L."/>
            <person name="Dedhia N."/>
            <person name="Gnoj L."/>
            <person name="Schutz K."/>
            <person name="Huang E."/>
            <person name="Spiegel L."/>
            <person name="Sekhon M."/>
            <person name="Murray J."/>
            <person name="Sheet P."/>
            <person name="Cordes M."/>
            <person name="Abu-Threideh J."/>
            <person name="Stoneking T."/>
            <person name="Kalicki J."/>
            <person name="Graves T."/>
            <person name="Harmon G."/>
            <person name="Edwards J."/>
            <person name="Latreille P."/>
            <person name="Courtney L."/>
            <person name="Cloud J."/>
            <person name="Abbott A."/>
            <person name="Scott K."/>
            <person name="Johnson D."/>
            <person name="Minx P."/>
            <person name="Bentley D."/>
            <person name="Fulton B."/>
            <person name="Miller N."/>
            <person name="Greco T."/>
            <person name="Kemp K."/>
            <person name="Kramer J."/>
            <person name="Fulton L."/>
            <person name="Mardis E."/>
            <person name="Dante M."/>
            <person name="Pepin K."/>
            <person name="Hillier L.W."/>
            <person name="Nelson J."/>
            <person name="Spieth J."/>
            <person name="Ryan E."/>
            <person name="Andrews S."/>
            <person name="Geisel C."/>
            <person name="Layman D."/>
            <person name="Du H."/>
            <person name="Ali J."/>
            <person name="Berghoff A."/>
            <person name="Jones K."/>
            <person name="Drone K."/>
            <person name="Cotton M."/>
            <person name="Joshu C."/>
            <person name="Antonoiu B."/>
            <person name="Zidanic M."/>
            <person name="Strong C."/>
            <person name="Sun H."/>
            <person name="Lamar B."/>
            <person name="Yordan C."/>
            <person name="Ma P."/>
            <person name="Zhong J."/>
            <person name="Preston R."/>
            <person name="Vil D."/>
            <person name="Shekher M."/>
            <person name="Matero A."/>
            <person name="Shah R."/>
            <person name="Swaby I.K."/>
            <person name="O'Shaughnessy A."/>
            <person name="Rodriguez M."/>
            <person name="Hoffman J."/>
            <person name="Till S."/>
            <person name="Granat S."/>
            <person name="Shohdy N."/>
            <person name="Hasegawa A."/>
            <person name="Hameed A."/>
            <person name="Lodhi M."/>
            <person name="Johnson A."/>
            <person name="Chen E."/>
            <person name="Marra M.A."/>
            <person name="Martienssen R."/>
            <person name="McCombie W.R."/>
        </authorList>
    </citation>
    <scope>NUCLEOTIDE SEQUENCE [LARGE SCALE GENOMIC DNA]</scope>
    <source>
        <strain>cv. Columbia</strain>
    </source>
</reference>
<reference key="2">
    <citation type="journal article" date="2017" name="Plant J.">
        <title>Araport11: a complete reannotation of the Arabidopsis thaliana reference genome.</title>
        <authorList>
            <person name="Cheng C.Y."/>
            <person name="Krishnakumar V."/>
            <person name="Chan A.P."/>
            <person name="Thibaud-Nissen F."/>
            <person name="Schobel S."/>
            <person name="Town C.D."/>
        </authorList>
    </citation>
    <scope>GENOME REANNOTATION</scope>
    <source>
        <strain>cv. Columbia</strain>
    </source>
</reference>
<reference key="3">
    <citation type="journal article" date="2003" name="Science">
        <title>Empirical analysis of transcriptional activity in the Arabidopsis genome.</title>
        <authorList>
            <person name="Yamada K."/>
            <person name="Lim J."/>
            <person name="Dale J.M."/>
            <person name="Chen H."/>
            <person name="Shinn P."/>
            <person name="Palm C.J."/>
            <person name="Southwick A.M."/>
            <person name="Wu H.C."/>
            <person name="Kim C.J."/>
            <person name="Nguyen M."/>
            <person name="Pham P.K."/>
            <person name="Cheuk R.F."/>
            <person name="Karlin-Newmann G."/>
            <person name="Liu S.X."/>
            <person name="Lam B."/>
            <person name="Sakano H."/>
            <person name="Wu T."/>
            <person name="Yu G."/>
            <person name="Miranda M."/>
            <person name="Quach H.L."/>
            <person name="Tripp M."/>
            <person name="Chang C.H."/>
            <person name="Lee J.M."/>
            <person name="Toriumi M.J."/>
            <person name="Chan M.M."/>
            <person name="Tang C.C."/>
            <person name="Onodera C.S."/>
            <person name="Deng J.M."/>
            <person name="Akiyama K."/>
            <person name="Ansari Y."/>
            <person name="Arakawa T."/>
            <person name="Banh J."/>
            <person name="Banno F."/>
            <person name="Bowser L."/>
            <person name="Brooks S.Y."/>
            <person name="Carninci P."/>
            <person name="Chao Q."/>
            <person name="Choy N."/>
            <person name="Enju A."/>
            <person name="Goldsmith A.D."/>
            <person name="Gurjal M."/>
            <person name="Hansen N.F."/>
            <person name="Hayashizaki Y."/>
            <person name="Johnson-Hopson C."/>
            <person name="Hsuan V.W."/>
            <person name="Iida K."/>
            <person name="Karnes M."/>
            <person name="Khan S."/>
            <person name="Koesema E."/>
            <person name="Ishida J."/>
            <person name="Jiang P.X."/>
            <person name="Jones T."/>
            <person name="Kawai J."/>
            <person name="Kamiya A."/>
            <person name="Meyers C."/>
            <person name="Nakajima M."/>
            <person name="Narusaka M."/>
            <person name="Seki M."/>
            <person name="Sakurai T."/>
            <person name="Satou M."/>
            <person name="Tamse R."/>
            <person name="Vaysberg M."/>
            <person name="Wallender E.K."/>
            <person name="Wong C."/>
            <person name="Yamamura Y."/>
            <person name="Yuan S."/>
            <person name="Shinozaki K."/>
            <person name="Davis R.W."/>
            <person name="Theologis A."/>
            <person name="Ecker J.R."/>
        </authorList>
    </citation>
    <scope>NUCLEOTIDE SEQUENCE [LARGE SCALE MRNA]</scope>
    <source>
        <strain>cv. Columbia</strain>
    </source>
</reference>
<reference key="4">
    <citation type="journal article" date="2017" name="Plant Cell">
        <title>ALKBH10B Is an RNA N6-Methyladenosine Demethylase Affecting Arabidopsis Floral Transition.</title>
        <authorList>
            <person name="Duan H.C."/>
            <person name="Wei L.H."/>
            <person name="Zhang C."/>
            <person name="Wang Y."/>
            <person name="Chen L."/>
            <person name="Lu Z."/>
            <person name="Chen P.R."/>
            <person name="He C."/>
            <person name="Jia G."/>
        </authorList>
    </citation>
    <scope>FUNCTION</scope>
    <scope>CATALYTIC ACTIVITY</scope>
    <scope>COFACTOR</scope>
    <scope>DISRUPTION PHENOTYPE</scope>
    <scope>MUTAGENESIS OF HIS-366 AND GLU-368</scope>
</reference>
<name>AK10B_ARATH</name>
<comment type="function">
    <text evidence="3">Dioxygenase that demethylates RNA by oxidative demethylation: specifically demethylates N(6)-methyladenosine (m6A) RNA, the most prevalent internal modification of messenger RNA (mRNA) in higher eukaryotes (PubMed:29180595). ALKBH10B-mediated mRNA m6A demethylation stabilizes the mRNA of the key flowering time regulators FT, SPL3 and SPL9, which are involved in the control of floral transition (PubMed:29180595).</text>
</comment>
<comment type="catalytic activity">
    <reaction evidence="3">
        <text>an N(6)-methyladenosine in mRNA + 2-oxoglutarate + O2 = an adenosine in mRNA + formaldehyde + succinate + CO2</text>
        <dbReference type="Rhea" id="RHEA:49520"/>
        <dbReference type="Rhea" id="RHEA-COMP:12414"/>
        <dbReference type="Rhea" id="RHEA-COMP:12417"/>
        <dbReference type="ChEBI" id="CHEBI:15379"/>
        <dbReference type="ChEBI" id="CHEBI:16526"/>
        <dbReference type="ChEBI" id="CHEBI:16810"/>
        <dbReference type="ChEBI" id="CHEBI:16842"/>
        <dbReference type="ChEBI" id="CHEBI:30031"/>
        <dbReference type="ChEBI" id="CHEBI:74411"/>
        <dbReference type="ChEBI" id="CHEBI:74449"/>
        <dbReference type="EC" id="1.14.11.53"/>
    </reaction>
</comment>
<comment type="cofactor">
    <cofactor evidence="3">
        <name>Fe(2+)</name>
        <dbReference type="ChEBI" id="CHEBI:29033"/>
    </cofactor>
    <text evidence="6">Binds 1 Fe(2+) ion per subunit.</text>
</comment>
<comment type="disruption phenotype">
    <text evidence="3">Reduced vegetative growth and late flowering.</text>
</comment>
<comment type="similarity">
    <text evidence="5">Belongs to the alkB family.</text>
</comment>
<organism>
    <name type="scientific">Arabidopsis thaliana</name>
    <name type="common">Mouse-ear cress</name>
    <dbReference type="NCBI Taxonomy" id="3702"/>
    <lineage>
        <taxon>Eukaryota</taxon>
        <taxon>Viridiplantae</taxon>
        <taxon>Streptophyta</taxon>
        <taxon>Embryophyta</taxon>
        <taxon>Tracheophyta</taxon>
        <taxon>Spermatophyta</taxon>
        <taxon>Magnoliopsida</taxon>
        <taxon>eudicotyledons</taxon>
        <taxon>Gunneridae</taxon>
        <taxon>Pentapetalae</taxon>
        <taxon>rosids</taxon>
        <taxon>malvids</taxon>
        <taxon>Brassicales</taxon>
        <taxon>Brassicaceae</taxon>
        <taxon>Camelineae</taxon>
        <taxon>Arabidopsis</taxon>
    </lineage>
</organism>
<dbReference type="EC" id="1.14.11.53" evidence="3"/>
<dbReference type="EMBL" id="AF069442">
    <property type="protein sequence ID" value="AAC79112.1"/>
    <property type="molecule type" value="Genomic_DNA"/>
</dbReference>
<dbReference type="EMBL" id="AL161495">
    <property type="protein sequence ID" value="CAB77779.1"/>
    <property type="molecule type" value="Genomic_DNA"/>
</dbReference>
<dbReference type="EMBL" id="CP002687">
    <property type="protein sequence ID" value="AEE82253.1"/>
    <property type="molecule type" value="Genomic_DNA"/>
</dbReference>
<dbReference type="EMBL" id="AY093043">
    <property type="protein sequence ID" value="AAM13042.1"/>
    <property type="molecule type" value="mRNA"/>
</dbReference>
<dbReference type="EMBL" id="AY128924">
    <property type="protein sequence ID" value="AAM91324.1"/>
    <property type="molecule type" value="mRNA"/>
</dbReference>
<dbReference type="PIR" id="T01399">
    <property type="entry name" value="T01399"/>
</dbReference>
<dbReference type="RefSeq" id="NP_192203.1">
    <property type="nucleotide sequence ID" value="NM_116528.6"/>
</dbReference>
<dbReference type="SMR" id="Q9ZT92"/>
<dbReference type="FunCoup" id="Q9ZT92">
    <property type="interactions" value="154"/>
</dbReference>
<dbReference type="IntAct" id="Q9ZT92">
    <property type="interactions" value="1"/>
</dbReference>
<dbReference type="STRING" id="3702.Q9ZT92"/>
<dbReference type="iPTMnet" id="Q9ZT92"/>
<dbReference type="PaxDb" id="3702-AT4G02940.1"/>
<dbReference type="ProteomicsDB" id="244921"/>
<dbReference type="EnsemblPlants" id="AT4G02940.1">
    <property type="protein sequence ID" value="AT4G02940.1"/>
    <property type="gene ID" value="AT4G02940"/>
</dbReference>
<dbReference type="GeneID" id="828132"/>
<dbReference type="Gramene" id="AT4G02940.1">
    <property type="protein sequence ID" value="AT4G02940.1"/>
    <property type="gene ID" value="AT4G02940"/>
</dbReference>
<dbReference type="KEGG" id="ath:AT4G02940"/>
<dbReference type="Araport" id="AT4G02940"/>
<dbReference type="TAIR" id="AT4G02940">
    <property type="gene designation" value="ALKBH10B"/>
</dbReference>
<dbReference type="eggNOG" id="KOG4176">
    <property type="taxonomic scope" value="Eukaryota"/>
</dbReference>
<dbReference type="HOGENOM" id="CLU_026669_0_0_1"/>
<dbReference type="InParanoid" id="Q9ZT92"/>
<dbReference type="OMA" id="TNHENCE"/>
<dbReference type="PhylomeDB" id="Q9ZT92"/>
<dbReference type="PRO" id="PR:Q9ZT92"/>
<dbReference type="Proteomes" id="UP000006548">
    <property type="component" value="Chromosome 4"/>
</dbReference>
<dbReference type="ExpressionAtlas" id="Q9ZT92">
    <property type="expression patterns" value="baseline and differential"/>
</dbReference>
<dbReference type="GO" id="GO:0032451">
    <property type="term" value="F:demethylase activity"/>
    <property type="evidence" value="ECO:0000314"/>
    <property type="project" value="TAIR"/>
</dbReference>
<dbReference type="GO" id="GO:0046872">
    <property type="term" value="F:metal ion binding"/>
    <property type="evidence" value="ECO:0007669"/>
    <property type="project" value="UniProtKB-KW"/>
</dbReference>
<dbReference type="GO" id="GO:0003729">
    <property type="term" value="F:mRNA binding"/>
    <property type="evidence" value="ECO:0000353"/>
    <property type="project" value="TAIR"/>
</dbReference>
<dbReference type="GO" id="GO:1990931">
    <property type="term" value="F:mRNA N6-methyladenosine dioxygenase activity"/>
    <property type="evidence" value="ECO:0000315"/>
    <property type="project" value="TAIR"/>
</dbReference>
<dbReference type="GO" id="GO:0006402">
    <property type="term" value="P:mRNA catabolic process"/>
    <property type="evidence" value="ECO:0000315"/>
    <property type="project" value="TAIR"/>
</dbReference>
<dbReference type="GO" id="GO:0010228">
    <property type="term" value="P:vegetative to reproductive phase transition of meristem"/>
    <property type="evidence" value="ECO:0000315"/>
    <property type="project" value="TAIR"/>
</dbReference>
<dbReference type="FunFam" id="2.60.120.590:FF:000032">
    <property type="entry name" value="RNA demethylase ALKBH10B"/>
    <property type="match status" value="1"/>
</dbReference>
<dbReference type="Gene3D" id="2.60.120.590">
    <property type="entry name" value="Alpha-ketoglutarate-dependent dioxygenase AlkB-like"/>
    <property type="match status" value="1"/>
</dbReference>
<dbReference type="InterPro" id="IPR037151">
    <property type="entry name" value="AlkB-like_sf"/>
</dbReference>
<dbReference type="InterPro" id="IPR044842">
    <property type="entry name" value="ALKBH9B/ALKBH10B-like"/>
</dbReference>
<dbReference type="PANTHER" id="PTHR31447">
    <property type="entry name" value="HYDROXYPROLINE-RICH GLYCOPROTEIN FAMILY PROTEIN-RELATED"/>
    <property type="match status" value="1"/>
</dbReference>
<dbReference type="PANTHER" id="PTHR31447:SF2">
    <property type="entry name" value="RNA DEMETHYLASE ALKBH10B"/>
    <property type="match status" value="1"/>
</dbReference>
<dbReference type="SUPFAM" id="SSF51197">
    <property type="entry name" value="Clavaminate synthase-like"/>
    <property type="match status" value="1"/>
</dbReference>
<feature type="chain" id="PRO_0000445521" description="RNA demethylase ALKBH10B">
    <location>
        <begin position="1"/>
        <end position="569"/>
    </location>
</feature>
<feature type="region of interest" description="Disordered" evidence="2">
    <location>
        <begin position="164"/>
        <end position="190"/>
    </location>
</feature>
<feature type="region of interest" description="Disordered" evidence="2">
    <location>
        <begin position="531"/>
        <end position="569"/>
    </location>
</feature>
<feature type="coiled-coil region" evidence="1">
    <location>
        <begin position="118"/>
        <end position="151"/>
    </location>
</feature>
<feature type="compositionally biased region" description="Acidic residues" evidence="2">
    <location>
        <begin position="167"/>
        <end position="179"/>
    </location>
</feature>
<feature type="compositionally biased region" description="Polar residues" evidence="2">
    <location>
        <begin position="180"/>
        <end position="189"/>
    </location>
</feature>
<feature type="compositionally biased region" description="Basic residues" evidence="2">
    <location>
        <begin position="531"/>
        <end position="545"/>
    </location>
</feature>
<feature type="compositionally biased region" description="Low complexity" evidence="2">
    <location>
        <begin position="551"/>
        <end position="560"/>
    </location>
</feature>
<feature type="binding site" evidence="6">
    <location>
        <position position="366"/>
    </location>
    <ligand>
        <name>Fe cation</name>
        <dbReference type="ChEBI" id="CHEBI:24875"/>
    </ligand>
</feature>
<feature type="binding site" evidence="6">
    <location>
        <position position="368"/>
    </location>
    <ligand>
        <name>Fe cation</name>
        <dbReference type="ChEBI" id="CHEBI:24875"/>
    </ligand>
</feature>
<feature type="binding site" evidence="6">
    <location>
        <position position="421"/>
    </location>
    <ligand>
        <name>Fe cation</name>
        <dbReference type="ChEBI" id="CHEBI:24875"/>
    </ligand>
</feature>
<feature type="binding site" evidence="6">
    <location>
        <position position="430"/>
    </location>
    <ligand>
        <name>2-oxoglutarate</name>
        <dbReference type="ChEBI" id="CHEBI:16810"/>
    </ligand>
</feature>
<feature type="mutagenesis site" description="Loss of catalytic activity; when associated with A-368." evidence="3">
    <original>H</original>
    <variation>A</variation>
    <location>
        <position position="366"/>
    </location>
</feature>
<feature type="mutagenesis site" description="Loss of catalytic activity; when associated with A-366." evidence="3">
    <original>E</original>
    <variation>A</variation>
    <location>
        <position position="368"/>
    </location>
</feature>
<sequence>MTIAAAPARQTDRSATGFNPAYVTTAKAVSVPVQVPPATVVSEGLGKDALISWFRGEFAAANAIIDAMCSHLRIAEEAVSGSEYEAVFAAIHRRRLNWIPVLQMQKYHSIAEVAIELQKVAAKKAEDLKQKKTEEEAEEDLKEVVATEEEEVKKECFNGEKVTENDVNGDVEDVEDDSPTSDITDSGSHQDVHQTVVADTAHQIICHSHEDCDARSCEIKPIKGFQAKEQVKGHTVNVVKGLKLYEELLKEDEISKLLDFVAELREAGINGKLAGESFILFNKQIKGNKRELIQLGVPIFGHVKADENSNDTNNSVNIEPIPPLLESVIDHFVTWRLIPEYKRPNGCVINFFEEGEYSQPFLKPPHLEQPISTLVLSESTMAYGRILSSDNEGNFRGPLTLSLKQGSLLVMRGNSADMARHVMCPSQNKRVSITFFRIRPDTYHNHSQPNSPRNDGVMTMWQPYQMTPTPFLNGYDHSIDMMPKLGVLRPPMVMMAPPPVQPMILPSPNVMGTGGGTGVFLPWASVNSSRKHVKHLPPRAQKKRLLPLPPAASSSPAGGSTSEPVITVG</sequence>
<accession>Q9ZT92</accession>
<proteinExistence type="evidence at protein level"/>